<accession>B2JQF0</accession>
<gene>
    <name evidence="1" type="primary">trpA</name>
    <name type="ordered locus">Bphy_4376</name>
</gene>
<protein>
    <recommendedName>
        <fullName evidence="1">Tryptophan synthase alpha chain</fullName>
        <ecNumber evidence="1">4.2.1.20</ecNumber>
    </recommendedName>
</protein>
<organism>
    <name type="scientific">Paraburkholderia phymatum (strain DSM 17167 / CIP 108236 / LMG 21445 / STM815)</name>
    <name type="common">Burkholderia phymatum</name>
    <dbReference type="NCBI Taxonomy" id="391038"/>
    <lineage>
        <taxon>Bacteria</taxon>
        <taxon>Pseudomonadati</taxon>
        <taxon>Pseudomonadota</taxon>
        <taxon>Betaproteobacteria</taxon>
        <taxon>Burkholderiales</taxon>
        <taxon>Burkholderiaceae</taxon>
        <taxon>Paraburkholderia</taxon>
    </lineage>
</organism>
<keyword id="KW-0028">Amino-acid biosynthesis</keyword>
<keyword id="KW-0057">Aromatic amino acid biosynthesis</keyword>
<keyword id="KW-0456">Lyase</keyword>
<keyword id="KW-1185">Reference proteome</keyword>
<keyword id="KW-0822">Tryptophan biosynthesis</keyword>
<name>TRPA_PARP8</name>
<proteinExistence type="inferred from homology"/>
<evidence type="ECO:0000255" key="1">
    <source>
        <dbReference type="HAMAP-Rule" id="MF_00131"/>
    </source>
</evidence>
<dbReference type="EC" id="4.2.1.20" evidence="1"/>
<dbReference type="EMBL" id="CP001044">
    <property type="protein sequence ID" value="ACC73491.1"/>
    <property type="molecule type" value="Genomic_DNA"/>
</dbReference>
<dbReference type="RefSeq" id="WP_012403664.1">
    <property type="nucleotide sequence ID" value="NC_010623.1"/>
</dbReference>
<dbReference type="SMR" id="B2JQF0"/>
<dbReference type="STRING" id="391038.Bphy_4376"/>
<dbReference type="KEGG" id="bph:Bphy_4376"/>
<dbReference type="eggNOG" id="COG0159">
    <property type="taxonomic scope" value="Bacteria"/>
</dbReference>
<dbReference type="HOGENOM" id="CLU_016734_0_0_4"/>
<dbReference type="OrthoDB" id="9804578at2"/>
<dbReference type="UniPathway" id="UPA00035">
    <property type="reaction ID" value="UER00044"/>
</dbReference>
<dbReference type="Proteomes" id="UP000001192">
    <property type="component" value="Chromosome 2"/>
</dbReference>
<dbReference type="GO" id="GO:0005829">
    <property type="term" value="C:cytosol"/>
    <property type="evidence" value="ECO:0007669"/>
    <property type="project" value="TreeGrafter"/>
</dbReference>
<dbReference type="GO" id="GO:0004834">
    <property type="term" value="F:tryptophan synthase activity"/>
    <property type="evidence" value="ECO:0007669"/>
    <property type="project" value="UniProtKB-UniRule"/>
</dbReference>
<dbReference type="CDD" id="cd04724">
    <property type="entry name" value="Tryptophan_synthase_alpha"/>
    <property type="match status" value="1"/>
</dbReference>
<dbReference type="FunFam" id="3.20.20.70:FF:000037">
    <property type="entry name" value="Tryptophan synthase alpha chain"/>
    <property type="match status" value="1"/>
</dbReference>
<dbReference type="Gene3D" id="3.20.20.70">
    <property type="entry name" value="Aldolase class I"/>
    <property type="match status" value="1"/>
</dbReference>
<dbReference type="HAMAP" id="MF_00131">
    <property type="entry name" value="Trp_synth_alpha"/>
    <property type="match status" value="1"/>
</dbReference>
<dbReference type="InterPro" id="IPR013785">
    <property type="entry name" value="Aldolase_TIM"/>
</dbReference>
<dbReference type="InterPro" id="IPR011060">
    <property type="entry name" value="RibuloseP-bd_barrel"/>
</dbReference>
<dbReference type="InterPro" id="IPR018204">
    <property type="entry name" value="Trp_synthase_alpha_AS"/>
</dbReference>
<dbReference type="InterPro" id="IPR002028">
    <property type="entry name" value="Trp_synthase_suA"/>
</dbReference>
<dbReference type="NCBIfam" id="TIGR00262">
    <property type="entry name" value="trpA"/>
    <property type="match status" value="1"/>
</dbReference>
<dbReference type="PANTHER" id="PTHR43406:SF1">
    <property type="entry name" value="TRYPTOPHAN SYNTHASE ALPHA CHAIN, CHLOROPLASTIC"/>
    <property type="match status" value="1"/>
</dbReference>
<dbReference type="PANTHER" id="PTHR43406">
    <property type="entry name" value="TRYPTOPHAN SYNTHASE, ALPHA CHAIN"/>
    <property type="match status" value="1"/>
</dbReference>
<dbReference type="Pfam" id="PF00290">
    <property type="entry name" value="Trp_syntA"/>
    <property type="match status" value="1"/>
</dbReference>
<dbReference type="SUPFAM" id="SSF51366">
    <property type="entry name" value="Ribulose-phoshate binding barrel"/>
    <property type="match status" value="1"/>
</dbReference>
<dbReference type="PROSITE" id="PS00167">
    <property type="entry name" value="TRP_SYNTHASE_ALPHA"/>
    <property type="match status" value="1"/>
</dbReference>
<feature type="chain" id="PRO_1000095700" description="Tryptophan synthase alpha chain">
    <location>
        <begin position="1"/>
        <end position="271"/>
    </location>
</feature>
<feature type="active site" description="Proton acceptor" evidence="1">
    <location>
        <position position="49"/>
    </location>
</feature>
<feature type="active site" description="Proton acceptor" evidence="1">
    <location>
        <position position="60"/>
    </location>
</feature>
<reference key="1">
    <citation type="journal article" date="2014" name="Stand. Genomic Sci.">
        <title>Complete genome sequence of Burkholderia phymatum STM815(T), a broad host range and efficient nitrogen-fixing symbiont of Mimosa species.</title>
        <authorList>
            <person name="Moulin L."/>
            <person name="Klonowska A."/>
            <person name="Caroline B."/>
            <person name="Booth K."/>
            <person name="Vriezen J.A."/>
            <person name="Melkonian R."/>
            <person name="James E.K."/>
            <person name="Young J.P."/>
            <person name="Bena G."/>
            <person name="Hauser L."/>
            <person name="Land M."/>
            <person name="Kyrpides N."/>
            <person name="Bruce D."/>
            <person name="Chain P."/>
            <person name="Copeland A."/>
            <person name="Pitluck S."/>
            <person name="Woyke T."/>
            <person name="Lizotte-Waniewski M."/>
            <person name="Bristow J."/>
            <person name="Riley M."/>
        </authorList>
    </citation>
    <scope>NUCLEOTIDE SEQUENCE [LARGE SCALE GENOMIC DNA]</scope>
    <source>
        <strain>DSM 17167 / CIP 108236 / LMG 21445 / STM815</strain>
    </source>
</reference>
<comment type="function">
    <text evidence="1">The alpha subunit is responsible for the aldol cleavage of indoleglycerol phosphate to indole and glyceraldehyde 3-phosphate.</text>
</comment>
<comment type="catalytic activity">
    <reaction evidence="1">
        <text>(1S,2R)-1-C-(indol-3-yl)glycerol 3-phosphate + L-serine = D-glyceraldehyde 3-phosphate + L-tryptophan + H2O</text>
        <dbReference type="Rhea" id="RHEA:10532"/>
        <dbReference type="ChEBI" id="CHEBI:15377"/>
        <dbReference type="ChEBI" id="CHEBI:33384"/>
        <dbReference type="ChEBI" id="CHEBI:57912"/>
        <dbReference type="ChEBI" id="CHEBI:58866"/>
        <dbReference type="ChEBI" id="CHEBI:59776"/>
        <dbReference type="EC" id="4.2.1.20"/>
    </reaction>
</comment>
<comment type="pathway">
    <text evidence="1">Amino-acid biosynthesis; L-tryptophan biosynthesis; L-tryptophan from chorismate: step 5/5.</text>
</comment>
<comment type="subunit">
    <text evidence="1">Tetramer of two alpha and two beta chains.</text>
</comment>
<comment type="similarity">
    <text evidence="1">Belongs to the TrpA family.</text>
</comment>
<sequence length="271" mass="28134">MSRIQSTFAALAAQGKKGLIPFMTAGDPDPARTVEFMHALAKGGADVIELGVPFSDPMADGPVIQQSSERALAKGVSLRHVLADVKRFRESDDKTPVVLMGYANPIERMGADAFAAAAKDAGVDGVLVVDYPPEESANFAETMKAAGIDPIFLLAPTSTDERIAEVGKIASGYVYYVSLKGVTGAANLDVLSIAGKIPAIKSRVPLPVGVGFGIRDAQSARAVAEVSDAVVIGSRIVQLLEEAAPQSAAGKLTNFIKEIRQALDSIGATAG</sequence>